<proteinExistence type="inferred from homology"/>
<sequence>MARITVEDCLNQIPNRFKLTLAATYRARELAQGHAPRLDSKDKPTVTALREIASGLTGLEMLRKVPT</sequence>
<organism>
    <name type="scientific">Bordetella parapertussis (strain 12822 / ATCC BAA-587 / NCTC 13253)</name>
    <dbReference type="NCBI Taxonomy" id="257311"/>
    <lineage>
        <taxon>Bacteria</taxon>
        <taxon>Pseudomonadati</taxon>
        <taxon>Pseudomonadota</taxon>
        <taxon>Betaproteobacteria</taxon>
        <taxon>Burkholderiales</taxon>
        <taxon>Alcaligenaceae</taxon>
        <taxon>Bordetella</taxon>
    </lineage>
</organism>
<accession>Q7W6B1</accession>
<feature type="chain" id="PRO_0000128919" description="DNA-directed RNA polymerase subunit omega">
    <location>
        <begin position="1"/>
        <end position="67"/>
    </location>
</feature>
<keyword id="KW-0240">DNA-directed RNA polymerase</keyword>
<keyword id="KW-0548">Nucleotidyltransferase</keyword>
<keyword id="KW-0804">Transcription</keyword>
<keyword id="KW-0808">Transferase</keyword>
<protein>
    <recommendedName>
        <fullName evidence="1">DNA-directed RNA polymerase subunit omega</fullName>
        <shortName evidence="1">RNAP omega subunit</shortName>
        <ecNumber evidence="1">2.7.7.6</ecNumber>
    </recommendedName>
    <alternativeName>
        <fullName evidence="1">RNA polymerase omega subunit</fullName>
    </alternativeName>
    <alternativeName>
        <fullName evidence="1">Transcriptase subunit omega</fullName>
    </alternativeName>
</protein>
<dbReference type="EC" id="2.7.7.6" evidence="1"/>
<dbReference type="EMBL" id="BX640432">
    <property type="protein sequence ID" value="CAE38296.1"/>
    <property type="molecule type" value="Genomic_DNA"/>
</dbReference>
<dbReference type="RefSeq" id="WP_003811126.1">
    <property type="nucleotide sequence ID" value="NC_002928.3"/>
</dbReference>
<dbReference type="SMR" id="Q7W6B1"/>
<dbReference type="GeneID" id="93204790"/>
<dbReference type="KEGG" id="bpa:BPP3006"/>
<dbReference type="HOGENOM" id="CLU_125406_5_1_4"/>
<dbReference type="Proteomes" id="UP000001421">
    <property type="component" value="Chromosome"/>
</dbReference>
<dbReference type="GO" id="GO:0000428">
    <property type="term" value="C:DNA-directed RNA polymerase complex"/>
    <property type="evidence" value="ECO:0007669"/>
    <property type="project" value="UniProtKB-KW"/>
</dbReference>
<dbReference type="GO" id="GO:0003677">
    <property type="term" value="F:DNA binding"/>
    <property type="evidence" value="ECO:0007669"/>
    <property type="project" value="UniProtKB-UniRule"/>
</dbReference>
<dbReference type="GO" id="GO:0003899">
    <property type="term" value="F:DNA-directed RNA polymerase activity"/>
    <property type="evidence" value="ECO:0007669"/>
    <property type="project" value="UniProtKB-UniRule"/>
</dbReference>
<dbReference type="GO" id="GO:0006351">
    <property type="term" value="P:DNA-templated transcription"/>
    <property type="evidence" value="ECO:0007669"/>
    <property type="project" value="UniProtKB-UniRule"/>
</dbReference>
<dbReference type="Gene3D" id="3.90.940.10">
    <property type="match status" value="1"/>
</dbReference>
<dbReference type="HAMAP" id="MF_00366">
    <property type="entry name" value="RNApol_bact_RpoZ"/>
    <property type="match status" value="1"/>
</dbReference>
<dbReference type="InterPro" id="IPR003716">
    <property type="entry name" value="DNA-dir_RNA_pol_omega"/>
</dbReference>
<dbReference type="InterPro" id="IPR006110">
    <property type="entry name" value="Pol_omega/Rpo6/RPB6"/>
</dbReference>
<dbReference type="InterPro" id="IPR036161">
    <property type="entry name" value="RPB6/omega-like_sf"/>
</dbReference>
<dbReference type="NCBIfam" id="TIGR00690">
    <property type="entry name" value="rpoZ"/>
    <property type="match status" value="1"/>
</dbReference>
<dbReference type="PANTHER" id="PTHR34476">
    <property type="entry name" value="DNA-DIRECTED RNA POLYMERASE SUBUNIT OMEGA"/>
    <property type="match status" value="1"/>
</dbReference>
<dbReference type="PANTHER" id="PTHR34476:SF1">
    <property type="entry name" value="DNA-DIRECTED RNA POLYMERASE SUBUNIT OMEGA"/>
    <property type="match status" value="1"/>
</dbReference>
<dbReference type="Pfam" id="PF01192">
    <property type="entry name" value="RNA_pol_Rpb6"/>
    <property type="match status" value="1"/>
</dbReference>
<dbReference type="SMART" id="SM01409">
    <property type="entry name" value="RNA_pol_Rpb6"/>
    <property type="match status" value="1"/>
</dbReference>
<dbReference type="SUPFAM" id="SSF63562">
    <property type="entry name" value="RPB6/omega subunit-like"/>
    <property type="match status" value="1"/>
</dbReference>
<name>RPOZ_BORPA</name>
<evidence type="ECO:0000255" key="1">
    <source>
        <dbReference type="HAMAP-Rule" id="MF_00366"/>
    </source>
</evidence>
<comment type="function">
    <text evidence="1">Promotes RNA polymerase assembly. Latches the N- and C-terminal regions of the beta' subunit thereby facilitating its interaction with the beta and alpha subunits.</text>
</comment>
<comment type="catalytic activity">
    <reaction evidence="1">
        <text>RNA(n) + a ribonucleoside 5'-triphosphate = RNA(n+1) + diphosphate</text>
        <dbReference type="Rhea" id="RHEA:21248"/>
        <dbReference type="Rhea" id="RHEA-COMP:14527"/>
        <dbReference type="Rhea" id="RHEA-COMP:17342"/>
        <dbReference type="ChEBI" id="CHEBI:33019"/>
        <dbReference type="ChEBI" id="CHEBI:61557"/>
        <dbReference type="ChEBI" id="CHEBI:140395"/>
        <dbReference type="EC" id="2.7.7.6"/>
    </reaction>
</comment>
<comment type="subunit">
    <text evidence="1">The RNAP catalytic core consists of 2 alpha, 1 beta, 1 beta' and 1 omega subunit. When a sigma factor is associated with the core the holoenzyme is formed, which can initiate transcription.</text>
</comment>
<comment type="similarity">
    <text evidence="1">Belongs to the RNA polymerase subunit omega family.</text>
</comment>
<reference key="1">
    <citation type="journal article" date="2003" name="Nat. Genet.">
        <title>Comparative analysis of the genome sequences of Bordetella pertussis, Bordetella parapertussis and Bordetella bronchiseptica.</title>
        <authorList>
            <person name="Parkhill J."/>
            <person name="Sebaihia M."/>
            <person name="Preston A."/>
            <person name="Murphy L.D."/>
            <person name="Thomson N.R."/>
            <person name="Harris D.E."/>
            <person name="Holden M.T.G."/>
            <person name="Churcher C.M."/>
            <person name="Bentley S.D."/>
            <person name="Mungall K.L."/>
            <person name="Cerdeno-Tarraga A.-M."/>
            <person name="Temple L."/>
            <person name="James K.D."/>
            <person name="Harris B."/>
            <person name="Quail M.A."/>
            <person name="Achtman M."/>
            <person name="Atkin R."/>
            <person name="Baker S."/>
            <person name="Basham D."/>
            <person name="Bason N."/>
            <person name="Cherevach I."/>
            <person name="Chillingworth T."/>
            <person name="Collins M."/>
            <person name="Cronin A."/>
            <person name="Davis P."/>
            <person name="Doggett J."/>
            <person name="Feltwell T."/>
            <person name="Goble A."/>
            <person name="Hamlin N."/>
            <person name="Hauser H."/>
            <person name="Holroyd S."/>
            <person name="Jagels K."/>
            <person name="Leather S."/>
            <person name="Moule S."/>
            <person name="Norberczak H."/>
            <person name="O'Neil S."/>
            <person name="Ormond D."/>
            <person name="Price C."/>
            <person name="Rabbinowitsch E."/>
            <person name="Rutter S."/>
            <person name="Sanders M."/>
            <person name="Saunders D."/>
            <person name="Seeger K."/>
            <person name="Sharp S."/>
            <person name="Simmonds M."/>
            <person name="Skelton J."/>
            <person name="Squares R."/>
            <person name="Squares S."/>
            <person name="Stevens K."/>
            <person name="Unwin L."/>
            <person name="Whitehead S."/>
            <person name="Barrell B.G."/>
            <person name="Maskell D.J."/>
        </authorList>
    </citation>
    <scope>NUCLEOTIDE SEQUENCE [LARGE SCALE GENOMIC DNA]</scope>
    <source>
        <strain>12822 / ATCC BAA-587 / NCTC 13253</strain>
    </source>
</reference>
<gene>
    <name evidence="1" type="primary">rpoZ</name>
    <name type="ordered locus">BPP3006</name>
</gene>